<accession>O65984</accession>
<accession>D9TN97</accession>
<dbReference type="EC" id="2.3.1.274" evidence="1"/>
<dbReference type="EMBL" id="AJ004870">
    <property type="protein sequence ID" value="CAA06178.1"/>
    <property type="status" value="ALT_INIT"/>
    <property type="molecule type" value="Genomic_DNA"/>
</dbReference>
<dbReference type="EMBL" id="CP002171">
    <property type="protein sequence ID" value="ADL69007.1"/>
    <property type="molecule type" value="Genomic_DNA"/>
</dbReference>
<dbReference type="RefSeq" id="WP_013297974.1">
    <property type="nucleotide sequence ID" value="NC_014410.1"/>
</dbReference>
<dbReference type="SMR" id="O65984"/>
<dbReference type="STRING" id="580327.Tthe_1497"/>
<dbReference type="GeneID" id="93864336"/>
<dbReference type="KEGG" id="ttm:Tthe_1497"/>
<dbReference type="eggNOG" id="COG0416">
    <property type="taxonomic scope" value="Bacteria"/>
</dbReference>
<dbReference type="HOGENOM" id="CLU_039379_1_1_9"/>
<dbReference type="OrthoDB" id="9806408at2"/>
<dbReference type="UniPathway" id="UPA00085"/>
<dbReference type="Proteomes" id="UP000001626">
    <property type="component" value="Chromosome"/>
</dbReference>
<dbReference type="GO" id="GO:0005737">
    <property type="term" value="C:cytoplasm"/>
    <property type="evidence" value="ECO:0007669"/>
    <property type="project" value="UniProtKB-SubCell"/>
</dbReference>
<dbReference type="GO" id="GO:0043811">
    <property type="term" value="F:phosphate:acyl-[acyl carrier protein] acyltransferase activity"/>
    <property type="evidence" value="ECO:0007669"/>
    <property type="project" value="UniProtKB-UniRule"/>
</dbReference>
<dbReference type="GO" id="GO:0006633">
    <property type="term" value="P:fatty acid biosynthetic process"/>
    <property type="evidence" value="ECO:0007669"/>
    <property type="project" value="UniProtKB-UniRule"/>
</dbReference>
<dbReference type="GO" id="GO:0008654">
    <property type="term" value="P:phospholipid biosynthetic process"/>
    <property type="evidence" value="ECO:0007669"/>
    <property type="project" value="UniProtKB-KW"/>
</dbReference>
<dbReference type="Gene3D" id="3.40.718.10">
    <property type="entry name" value="Isopropylmalate Dehydrogenase"/>
    <property type="match status" value="1"/>
</dbReference>
<dbReference type="HAMAP" id="MF_00019">
    <property type="entry name" value="PlsX"/>
    <property type="match status" value="1"/>
</dbReference>
<dbReference type="InterPro" id="IPR003664">
    <property type="entry name" value="FA_synthesis"/>
</dbReference>
<dbReference type="InterPro" id="IPR012281">
    <property type="entry name" value="Phospholipid_synth_PlsX-like"/>
</dbReference>
<dbReference type="NCBIfam" id="TIGR00182">
    <property type="entry name" value="plsX"/>
    <property type="match status" value="1"/>
</dbReference>
<dbReference type="PANTHER" id="PTHR30100">
    <property type="entry name" value="FATTY ACID/PHOSPHOLIPID SYNTHESIS PROTEIN PLSX"/>
    <property type="match status" value="1"/>
</dbReference>
<dbReference type="PANTHER" id="PTHR30100:SF1">
    <property type="entry name" value="PHOSPHATE ACYLTRANSFERASE"/>
    <property type="match status" value="1"/>
</dbReference>
<dbReference type="Pfam" id="PF02504">
    <property type="entry name" value="FA_synthesis"/>
    <property type="match status" value="1"/>
</dbReference>
<dbReference type="PIRSF" id="PIRSF002465">
    <property type="entry name" value="Phsphlp_syn_PlsX"/>
    <property type="match status" value="1"/>
</dbReference>
<dbReference type="SUPFAM" id="SSF53659">
    <property type="entry name" value="Isocitrate/Isopropylmalate dehydrogenase-like"/>
    <property type="match status" value="1"/>
</dbReference>
<protein>
    <recommendedName>
        <fullName evidence="1">Phosphate acyltransferase</fullName>
        <ecNumber evidence="1">2.3.1.274</ecNumber>
    </recommendedName>
    <alternativeName>
        <fullName evidence="1">Acyl-ACP phosphotransacylase</fullName>
    </alternativeName>
    <alternativeName>
        <fullName evidence="1">Acyl-[acyl-carrier-protein]--phosphate acyltransferase</fullName>
    </alternativeName>
    <alternativeName>
        <fullName evidence="1">Phosphate-acyl-ACP acyltransferase</fullName>
    </alternativeName>
</protein>
<gene>
    <name evidence="1" type="primary">plsX</name>
    <name type="ordered locus">Tthe_1497</name>
</gene>
<evidence type="ECO:0000255" key="1">
    <source>
        <dbReference type="HAMAP-Rule" id="MF_00019"/>
    </source>
</evidence>
<evidence type="ECO:0000305" key="2"/>
<organism>
    <name type="scientific">Thermoanaerobacterium thermosaccharolyticum (strain ATCC 7956 / DSM 571 / NCIMB 9385 / NCA 3814 / NCTC 13789 / WDCM 00135 / 2032)</name>
    <name type="common">Clostridium thermosaccharolyticum</name>
    <dbReference type="NCBI Taxonomy" id="580327"/>
    <lineage>
        <taxon>Bacteria</taxon>
        <taxon>Bacillati</taxon>
        <taxon>Bacillota</taxon>
        <taxon>Clostridia</taxon>
        <taxon>Thermoanaerobacterales</taxon>
        <taxon>Thermoanaerobacteraceae</taxon>
        <taxon>Thermoanaerobacterium</taxon>
    </lineage>
</organism>
<keyword id="KW-0963">Cytoplasm</keyword>
<keyword id="KW-0444">Lipid biosynthesis</keyword>
<keyword id="KW-0443">Lipid metabolism</keyword>
<keyword id="KW-0594">Phospholipid biosynthesis</keyword>
<keyword id="KW-1208">Phospholipid metabolism</keyword>
<keyword id="KW-1185">Reference proteome</keyword>
<keyword id="KW-0808">Transferase</keyword>
<name>PLSX_THETC</name>
<reference key="1">
    <citation type="submission" date="1998-03" db="EMBL/GenBank/DDBJ databases">
        <authorList>
            <person name="van Rinsum A."/>
        </authorList>
    </citation>
    <scope>NUCLEOTIDE SEQUENCE [GENOMIC DNA]</scope>
    <source>
        <strain>ATCC 7956 / DSM 571 / NCIMB 9385 / NCA 3814 / NCTC 13789 / WDCM 00135 / 2032</strain>
    </source>
</reference>
<reference key="2">
    <citation type="submission" date="2010-08" db="EMBL/GenBank/DDBJ databases">
        <title>Complete sequence of Thermoanaerobacterium thermosaccharolyticum DSM 571.</title>
        <authorList>
            <consortium name="US DOE Joint Genome Institute"/>
            <person name="Lucas S."/>
            <person name="Copeland A."/>
            <person name="Lapidus A."/>
            <person name="Cheng J.-F."/>
            <person name="Bruce D."/>
            <person name="Goodwin L."/>
            <person name="Pitluck S."/>
            <person name="Teshima H."/>
            <person name="Detter J.C."/>
            <person name="Han C."/>
            <person name="Tapia R."/>
            <person name="Land M."/>
            <person name="Hauser L."/>
            <person name="Chang Y.-J."/>
            <person name="Jeffries C."/>
            <person name="Kyrpides N."/>
            <person name="Ivanova N."/>
            <person name="Mikhailova N."/>
            <person name="Hemme C.L."/>
            <person name="Woyke T."/>
        </authorList>
    </citation>
    <scope>NUCLEOTIDE SEQUENCE [LARGE SCALE GENOMIC DNA]</scope>
    <source>
        <strain>ATCC 7956 / DSM 571 / NCIMB 9385 / NCA 3814 / NCTC 13789 / WDCM 00135 / 2032</strain>
    </source>
</reference>
<sequence>MRIAVDAMGGDYAPLEITKGVYKALENFNIEIVLVGNKDQLDKYVKEEKGLTVVHTTETITNNEPPVAAIRKKKDSSMAVGIDMLKKGEVDAFLSAGNTGALMAGSLLKIGRIKGIDRPALAPILPTLNGATILLDAGSNTDCKPINLFQFAIMGNVYAQKMLNIDNPKIGLFNIGAEEEKGNELTKQVYDLIKNSHLNFIGNVEGRDIAYGVADVVTCDGFVGNAILKSMEGTASVISSLLKQELQRNLLTKLGAILIYNGLKNIVKKMDYTEYGGAPLLGIKKPVIKAHGSSKSKAIFNAIRQAKTIVEMDVISHIQREIELIGDDISAAK</sequence>
<feature type="chain" id="PRO_0000189871" description="Phosphate acyltransferase">
    <location>
        <begin position="1"/>
        <end position="333"/>
    </location>
</feature>
<feature type="sequence conflict" description="In Ref. 1; CAA06178." evidence="2" ref="1">
    <original>M</original>
    <variation>L</variation>
    <location>
        <position position="84"/>
    </location>
</feature>
<feature type="sequence conflict" description="In Ref. 1; CAA06178." evidence="2" ref="1">
    <original>N</original>
    <variation>T</variation>
    <location>
        <position position="140"/>
    </location>
</feature>
<feature type="sequence conflict" description="In Ref. 1; CAA06178." evidence="2" ref="1">
    <original>I</original>
    <variation>V</variation>
    <location>
        <position position="201"/>
    </location>
</feature>
<feature type="sequence conflict" description="In Ref. 1; CAA06178." evidence="2" ref="1">
    <original>G</original>
    <variation>C</variation>
    <location>
        <position position="233"/>
    </location>
</feature>
<proteinExistence type="inferred from homology"/>
<comment type="function">
    <text evidence="1">Catalyzes the reversible formation of acyl-phosphate (acyl-PO(4)) from acyl-[acyl-carrier-protein] (acyl-ACP). This enzyme utilizes acyl-ACP as fatty acyl donor, but not acyl-CoA.</text>
</comment>
<comment type="catalytic activity">
    <reaction evidence="1">
        <text>a fatty acyl-[ACP] + phosphate = an acyl phosphate + holo-[ACP]</text>
        <dbReference type="Rhea" id="RHEA:42292"/>
        <dbReference type="Rhea" id="RHEA-COMP:9685"/>
        <dbReference type="Rhea" id="RHEA-COMP:14125"/>
        <dbReference type="ChEBI" id="CHEBI:43474"/>
        <dbReference type="ChEBI" id="CHEBI:59918"/>
        <dbReference type="ChEBI" id="CHEBI:64479"/>
        <dbReference type="ChEBI" id="CHEBI:138651"/>
        <dbReference type="EC" id="2.3.1.274"/>
    </reaction>
</comment>
<comment type="pathway">
    <text evidence="1">Lipid metabolism; phospholipid metabolism.</text>
</comment>
<comment type="subunit">
    <text evidence="1">Homodimer. Probably interacts with PlsY.</text>
</comment>
<comment type="subcellular location">
    <subcellularLocation>
        <location evidence="1">Cytoplasm</location>
    </subcellularLocation>
    <text evidence="1">Associated with the membrane possibly through PlsY.</text>
</comment>
<comment type="similarity">
    <text evidence="1">Belongs to the PlsX family.</text>
</comment>
<comment type="sequence caution" evidence="2">
    <conflict type="erroneous initiation">
        <sequence resource="EMBL-CDS" id="CAA06178"/>
    </conflict>
    <text>Truncated N-terminus.</text>
</comment>